<proteinExistence type="evidence at transcript level"/>
<evidence type="ECO:0000250" key="1"/>
<evidence type="ECO:0000255" key="2">
    <source>
        <dbReference type="PROSITE-ProRule" id="PRU00639"/>
    </source>
</evidence>
<evidence type="ECO:0000305" key="3"/>
<organism>
    <name type="scientific">Sus scrofa</name>
    <name type="common">Pig</name>
    <dbReference type="NCBI Taxonomy" id="9823"/>
    <lineage>
        <taxon>Eukaryota</taxon>
        <taxon>Metazoa</taxon>
        <taxon>Chordata</taxon>
        <taxon>Craniata</taxon>
        <taxon>Vertebrata</taxon>
        <taxon>Euteleostomi</taxon>
        <taxon>Mammalia</taxon>
        <taxon>Eutheria</taxon>
        <taxon>Laurasiatheria</taxon>
        <taxon>Artiodactyla</taxon>
        <taxon>Suina</taxon>
        <taxon>Suidae</taxon>
        <taxon>Sus</taxon>
    </lineage>
</organism>
<feature type="chain" id="PRO_0000076936" description="Galectin-4">
    <location>
        <begin position="1"/>
        <end position="323"/>
    </location>
</feature>
<feature type="domain" description="Galectin 1" evidence="2">
    <location>
        <begin position="19"/>
        <end position="150"/>
    </location>
</feature>
<feature type="domain" description="Galectin 2" evidence="2">
    <location>
        <begin position="194"/>
        <end position="323"/>
    </location>
</feature>
<feature type="binding site" evidence="1">
    <location>
        <begin position="256"/>
        <end position="262"/>
    </location>
    <ligand>
        <name>a beta-D-galactoside</name>
        <dbReference type="ChEBI" id="CHEBI:28034"/>
    </ligand>
</feature>
<feature type="sequence conflict" description="In Ref. 2; CAA23179." evidence="3" ref="2">
    <original>AP</original>
    <variation>GA</variation>
    <location>
        <begin position="98"/>
        <end position="99"/>
    </location>
</feature>
<feature type="sequence conflict" description="In Ref. 2; CAA23179." evidence="3" ref="2">
    <original>H</original>
    <variation>T</variation>
    <location>
        <position position="126"/>
    </location>
</feature>
<accession>Q29058</accession>
<accession>Q29296</accession>
<comment type="function">
    <text>Galectin that binds lactose and a related range of sugars. May be involved in the assembly of adherens junctions.</text>
</comment>
<comment type="subunit">
    <text>Monomer.</text>
</comment>
<comment type="domain">
    <text>Contains two homologous but distinct carbohydrate-binding domains.</text>
</comment>
<protein>
    <recommendedName>
        <fullName>Galectin-4</fullName>
        <shortName>Gal-4</shortName>
    </recommendedName>
    <alternativeName>
        <fullName>L-36 lactose-binding protein</fullName>
        <shortName>L36LBP</shortName>
    </alternativeName>
    <alternativeName>
        <fullName>Lactose-binding lectin 4</fullName>
    </alternativeName>
</protein>
<gene>
    <name type="primary">LGALS4</name>
</gene>
<sequence length="323" mass="35852">MAFVPAPGYQPTYNPTLPYYKPIPGGLRVGMSVYIQGVANEHMKRFFVNFVVGQGPGADVAFHFNPRFDGWDKVVFNSQQDGKWGNEEKKRSMPFRKAPAFELVIMVLPEHYKVVVNGDPFYEFGHRIPVQLVTHLQVDGDLTLQSINFIGGQPAPSPGPMPNPGYPGPGKHNQQPCNLPCMEGAPTFNPPVPYKTRLQGGLVARRTIVIKGYVPPSGKSLVINFKVGSSGDVALHINPRLTEGIVVRNSYLNGKWGAEERKSSFNPFAPGQYFDLSIRCGLDRFKVYANGQHLFDFSHRLSNFQGVDTLEIQGDVTLSYVQI</sequence>
<reference key="1">
    <citation type="journal article" date="1994" name="J. Biol. Chem.">
        <title>An adherens junction protein is a member of the family of lactose-binding lectins.</title>
        <authorList>
            <person name="Chiu M.L."/>
            <person name="Parry D.A.D."/>
            <person name="Feldman S.R."/>
            <person name="Klapper D.G."/>
            <person name="O'Keefe E.J."/>
        </authorList>
    </citation>
    <scope>NUCLEOTIDE SEQUENCE [MRNA]</scope>
    <source>
        <tissue>Tongue</tissue>
    </source>
</reference>
<reference key="2">
    <citation type="journal article" date="1996" name="Mamm. Genome">
        <title>Evaluation and characterization of a porcine small intestine cDNA library: analysis of 839 clones.</title>
        <authorList>
            <person name="Winteroe A.K."/>
            <person name="Fredholm M."/>
            <person name="Davies W."/>
        </authorList>
    </citation>
    <scope>NUCLEOTIDE SEQUENCE [LARGE SCALE MRNA] OF 1-140</scope>
    <source>
        <tissue>Small intestine</tissue>
    </source>
</reference>
<name>LEG4_PIG</name>
<dbReference type="EMBL" id="X79303">
    <property type="protein sequence ID" value="CAA55884.1"/>
    <property type="molecule type" value="mRNA"/>
</dbReference>
<dbReference type="EMBL" id="F14653">
    <property type="protein sequence ID" value="CAA23179.1"/>
    <property type="molecule type" value="mRNA"/>
</dbReference>
<dbReference type="PIR" id="A55664">
    <property type="entry name" value="A55664"/>
</dbReference>
<dbReference type="RefSeq" id="NP_999146.1">
    <property type="nucleotide sequence ID" value="NM_213981.1"/>
</dbReference>
<dbReference type="SMR" id="Q29058"/>
<dbReference type="FunCoup" id="Q29058">
    <property type="interactions" value="159"/>
</dbReference>
<dbReference type="STRING" id="9823.ENSSSCP00000064652"/>
<dbReference type="PeptideAtlas" id="Q29058"/>
<dbReference type="GeneID" id="397041"/>
<dbReference type="KEGG" id="ssc:397041"/>
<dbReference type="CTD" id="3960"/>
<dbReference type="InParanoid" id="Q29058"/>
<dbReference type="OrthoDB" id="6251307at2759"/>
<dbReference type="Proteomes" id="UP000008227">
    <property type="component" value="Unplaced"/>
</dbReference>
<dbReference type="Proteomes" id="UP000314985">
    <property type="component" value="Unplaced"/>
</dbReference>
<dbReference type="Proteomes" id="UP000694570">
    <property type="component" value="Unplaced"/>
</dbReference>
<dbReference type="Proteomes" id="UP000694571">
    <property type="component" value="Unplaced"/>
</dbReference>
<dbReference type="Proteomes" id="UP000694720">
    <property type="component" value="Unplaced"/>
</dbReference>
<dbReference type="Proteomes" id="UP000694722">
    <property type="component" value="Unplaced"/>
</dbReference>
<dbReference type="Proteomes" id="UP000694723">
    <property type="component" value="Unplaced"/>
</dbReference>
<dbReference type="Proteomes" id="UP000694724">
    <property type="component" value="Unplaced"/>
</dbReference>
<dbReference type="Proteomes" id="UP000694725">
    <property type="component" value="Unplaced"/>
</dbReference>
<dbReference type="Proteomes" id="UP000694726">
    <property type="component" value="Unplaced"/>
</dbReference>
<dbReference type="Proteomes" id="UP000694727">
    <property type="component" value="Unplaced"/>
</dbReference>
<dbReference type="Proteomes" id="UP000694728">
    <property type="component" value="Unplaced"/>
</dbReference>
<dbReference type="GO" id="GO:0030246">
    <property type="term" value="F:carbohydrate binding"/>
    <property type="evidence" value="ECO:0000318"/>
    <property type="project" value="GO_Central"/>
</dbReference>
<dbReference type="CDD" id="cd00070">
    <property type="entry name" value="GLECT"/>
    <property type="match status" value="2"/>
</dbReference>
<dbReference type="FunFam" id="2.60.120.200:FF:000124">
    <property type="entry name" value="Galectin-4"/>
    <property type="match status" value="2"/>
</dbReference>
<dbReference type="Gene3D" id="2.60.120.200">
    <property type="match status" value="2"/>
</dbReference>
<dbReference type="InterPro" id="IPR013320">
    <property type="entry name" value="ConA-like_dom_sf"/>
</dbReference>
<dbReference type="InterPro" id="IPR044156">
    <property type="entry name" value="Galectin-like"/>
</dbReference>
<dbReference type="InterPro" id="IPR001079">
    <property type="entry name" value="Galectin_CRD"/>
</dbReference>
<dbReference type="PANTHER" id="PTHR11346">
    <property type="entry name" value="GALECTIN"/>
    <property type="match status" value="1"/>
</dbReference>
<dbReference type="PANTHER" id="PTHR11346:SF32">
    <property type="entry name" value="GALECTIN-4"/>
    <property type="match status" value="1"/>
</dbReference>
<dbReference type="Pfam" id="PF00337">
    <property type="entry name" value="Gal-bind_lectin"/>
    <property type="match status" value="2"/>
</dbReference>
<dbReference type="SMART" id="SM00908">
    <property type="entry name" value="Gal-bind_lectin"/>
    <property type="match status" value="2"/>
</dbReference>
<dbReference type="SMART" id="SM00276">
    <property type="entry name" value="GLECT"/>
    <property type="match status" value="2"/>
</dbReference>
<dbReference type="SUPFAM" id="SSF49899">
    <property type="entry name" value="Concanavalin A-like lectins/glucanases"/>
    <property type="match status" value="2"/>
</dbReference>
<dbReference type="PROSITE" id="PS51304">
    <property type="entry name" value="GALECTIN"/>
    <property type="match status" value="2"/>
</dbReference>
<keyword id="KW-0430">Lectin</keyword>
<keyword id="KW-1185">Reference proteome</keyword>
<keyword id="KW-0677">Repeat</keyword>